<dbReference type="EC" id="5.4.99.-"/>
<dbReference type="EMBL" id="AE000511">
    <property type="protein sequence ID" value="AAD07795.1"/>
    <property type="molecule type" value="Genomic_DNA"/>
</dbReference>
<dbReference type="PIR" id="A64613">
    <property type="entry name" value="A64613"/>
</dbReference>
<dbReference type="RefSeq" id="NP_207538.1">
    <property type="nucleotide sequence ID" value="NC_000915.1"/>
</dbReference>
<dbReference type="RefSeq" id="WP_001174316.1">
    <property type="nucleotide sequence ID" value="NC_018939.1"/>
</dbReference>
<dbReference type="SMR" id="O25441"/>
<dbReference type="DIP" id="DIP-3289N"/>
<dbReference type="FunCoup" id="O25441">
    <property type="interactions" value="389"/>
</dbReference>
<dbReference type="IntAct" id="O25441">
    <property type="interactions" value="2"/>
</dbReference>
<dbReference type="MINT" id="O25441"/>
<dbReference type="STRING" id="85962.HP_0745"/>
<dbReference type="PaxDb" id="85962-C694_03835"/>
<dbReference type="EnsemblBacteria" id="AAD07795">
    <property type="protein sequence ID" value="AAD07795"/>
    <property type="gene ID" value="HP_0745"/>
</dbReference>
<dbReference type="KEGG" id="heo:C694_03835"/>
<dbReference type="KEGG" id="hpy:HP_0745"/>
<dbReference type="PATRIC" id="fig|85962.47.peg.795"/>
<dbReference type="eggNOG" id="COG0564">
    <property type="taxonomic scope" value="Bacteria"/>
</dbReference>
<dbReference type="InParanoid" id="O25441"/>
<dbReference type="OrthoDB" id="128480at2"/>
<dbReference type="PhylomeDB" id="O25441"/>
<dbReference type="Proteomes" id="UP000000429">
    <property type="component" value="Chromosome"/>
</dbReference>
<dbReference type="GO" id="GO:0009982">
    <property type="term" value="F:pseudouridine synthase activity"/>
    <property type="evidence" value="ECO:0000318"/>
    <property type="project" value="GO_Central"/>
</dbReference>
<dbReference type="GO" id="GO:0003723">
    <property type="term" value="F:RNA binding"/>
    <property type="evidence" value="ECO:0007669"/>
    <property type="project" value="UniProtKB-KW"/>
</dbReference>
<dbReference type="GO" id="GO:0120159">
    <property type="term" value="F:rRNA pseudouridine synthase activity"/>
    <property type="evidence" value="ECO:0007669"/>
    <property type="project" value="UniProtKB-ARBA"/>
</dbReference>
<dbReference type="GO" id="GO:0000455">
    <property type="term" value="P:enzyme-directed rRNA pseudouridine synthesis"/>
    <property type="evidence" value="ECO:0000318"/>
    <property type="project" value="GO_Central"/>
</dbReference>
<dbReference type="CDD" id="cd02869">
    <property type="entry name" value="PseudoU_synth_RluA_like"/>
    <property type="match status" value="1"/>
</dbReference>
<dbReference type="CDD" id="cd00165">
    <property type="entry name" value="S4"/>
    <property type="match status" value="1"/>
</dbReference>
<dbReference type="FunFam" id="3.30.2350.10:FF:000044">
    <property type="entry name" value="Pseudouridine synthase"/>
    <property type="match status" value="1"/>
</dbReference>
<dbReference type="Gene3D" id="3.30.2350.10">
    <property type="entry name" value="Pseudouridine synthase"/>
    <property type="match status" value="1"/>
</dbReference>
<dbReference type="Gene3D" id="3.10.290.10">
    <property type="entry name" value="RNA-binding S4 domain"/>
    <property type="match status" value="1"/>
</dbReference>
<dbReference type="InterPro" id="IPR020103">
    <property type="entry name" value="PsdUridine_synth_cat_dom_sf"/>
</dbReference>
<dbReference type="InterPro" id="IPR006224">
    <property type="entry name" value="PsdUridine_synth_RluA-like_CS"/>
</dbReference>
<dbReference type="InterPro" id="IPR006225">
    <property type="entry name" value="PsdUridine_synth_RluC/D"/>
</dbReference>
<dbReference type="InterPro" id="IPR006145">
    <property type="entry name" value="PsdUridine_synth_RsuA/RluA"/>
</dbReference>
<dbReference type="InterPro" id="IPR050188">
    <property type="entry name" value="RluA_PseudoU_synthase"/>
</dbReference>
<dbReference type="InterPro" id="IPR002942">
    <property type="entry name" value="S4_RNA-bd"/>
</dbReference>
<dbReference type="InterPro" id="IPR036986">
    <property type="entry name" value="S4_RNA-bd_sf"/>
</dbReference>
<dbReference type="NCBIfam" id="TIGR00005">
    <property type="entry name" value="rluA_subfam"/>
    <property type="match status" value="1"/>
</dbReference>
<dbReference type="PANTHER" id="PTHR21600">
    <property type="entry name" value="MITOCHONDRIAL RNA PSEUDOURIDINE SYNTHASE"/>
    <property type="match status" value="1"/>
</dbReference>
<dbReference type="PANTHER" id="PTHR21600:SF44">
    <property type="entry name" value="RIBOSOMAL LARGE SUBUNIT PSEUDOURIDINE SYNTHASE D"/>
    <property type="match status" value="1"/>
</dbReference>
<dbReference type="Pfam" id="PF00849">
    <property type="entry name" value="PseudoU_synth_2"/>
    <property type="match status" value="1"/>
</dbReference>
<dbReference type="Pfam" id="PF01479">
    <property type="entry name" value="S4"/>
    <property type="match status" value="1"/>
</dbReference>
<dbReference type="SMART" id="SM00363">
    <property type="entry name" value="S4"/>
    <property type="match status" value="1"/>
</dbReference>
<dbReference type="SUPFAM" id="SSF55174">
    <property type="entry name" value="Alpha-L RNA-binding motif"/>
    <property type="match status" value="1"/>
</dbReference>
<dbReference type="SUPFAM" id="SSF55120">
    <property type="entry name" value="Pseudouridine synthase"/>
    <property type="match status" value="1"/>
</dbReference>
<dbReference type="PROSITE" id="PS01129">
    <property type="entry name" value="PSI_RLU"/>
    <property type="match status" value="1"/>
</dbReference>
<dbReference type="PROSITE" id="PS50889">
    <property type="entry name" value="S4"/>
    <property type="match status" value="1"/>
</dbReference>
<feature type="chain" id="PRO_0000162735" description="Uncharacterized RNA pseudouridine synthase HP_0745">
    <location>
        <begin position="1"/>
        <end position="327"/>
    </location>
</feature>
<feature type="domain" description="S4 RNA-binding" evidence="2">
    <location>
        <begin position="12"/>
        <end position="79"/>
    </location>
</feature>
<feature type="active site" evidence="1">
    <location>
        <position position="136"/>
    </location>
</feature>
<reference key="1">
    <citation type="journal article" date="1997" name="Nature">
        <title>The complete genome sequence of the gastric pathogen Helicobacter pylori.</title>
        <authorList>
            <person name="Tomb J.-F."/>
            <person name="White O."/>
            <person name="Kerlavage A.R."/>
            <person name="Clayton R.A."/>
            <person name="Sutton G.G."/>
            <person name="Fleischmann R.D."/>
            <person name="Ketchum K.A."/>
            <person name="Klenk H.-P."/>
            <person name="Gill S.R."/>
            <person name="Dougherty B.A."/>
            <person name="Nelson K.E."/>
            <person name="Quackenbush J."/>
            <person name="Zhou L."/>
            <person name="Kirkness E.F."/>
            <person name="Peterson S.N."/>
            <person name="Loftus B.J."/>
            <person name="Richardson D.L."/>
            <person name="Dodson R.J."/>
            <person name="Khalak H.G."/>
            <person name="Glodek A."/>
            <person name="McKenney K."/>
            <person name="FitzGerald L.M."/>
            <person name="Lee N."/>
            <person name="Adams M.D."/>
            <person name="Hickey E.K."/>
            <person name="Berg D.E."/>
            <person name="Gocayne J.D."/>
            <person name="Utterback T.R."/>
            <person name="Peterson J.D."/>
            <person name="Kelley J.M."/>
            <person name="Cotton M.D."/>
            <person name="Weidman J.F."/>
            <person name="Fujii C."/>
            <person name="Bowman C."/>
            <person name="Watthey L."/>
            <person name="Wallin E."/>
            <person name="Hayes W.S."/>
            <person name="Borodovsky M."/>
            <person name="Karp P.D."/>
            <person name="Smith H.O."/>
            <person name="Fraser C.M."/>
            <person name="Venter J.C."/>
        </authorList>
    </citation>
    <scope>NUCLEOTIDE SEQUENCE [LARGE SCALE GENOMIC DNA]</scope>
    <source>
        <strain>ATCC 700392 / 26695</strain>
    </source>
</reference>
<sequence length="327" mass="37922">MQKVFIALTDHKRLDEFLAKELQISKNQVLNLIKEGLVFCQKKEVKKGGLALKEGDEITLLTPKITPKPLKKELDLEIEVIFEDEDLLVLNKPPNLVVHKALSVKEPTLVDWLEFKNYELSNLGLKERYGIVHRLDKDTSGGIVIAKNNFTHVHLSEQLKTKMMGRYYIALLSTPLKEEKMSVECYLTRNPNNRLKMIALKAVKKEKSRYSKSEFISLLTSQNNLNLIGAKLFTGRTHQIRAHLEYLNRHIIGDNLYGLNGALPKEEIRIMLHAYLIEFKHPRSEQKLRFKVPLLKDMLEYLKKVFDKENLDEVLDEEKILHAFIAK</sequence>
<gene>
    <name type="ordered locus">HP_0745</name>
</gene>
<name>Y745_HELPY</name>
<proteinExistence type="inferred from homology"/>
<evidence type="ECO:0000250" key="1"/>
<evidence type="ECO:0000255" key="2">
    <source>
        <dbReference type="PROSITE-ProRule" id="PRU00182"/>
    </source>
</evidence>
<evidence type="ECO:0000305" key="3"/>
<accession>O25441</accession>
<protein>
    <recommendedName>
        <fullName>Uncharacterized RNA pseudouridine synthase HP_0745</fullName>
        <ecNumber>5.4.99.-</ecNumber>
    </recommendedName>
    <alternativeName>
        <fullName>RNA pseudouridylate synthase</fullName>
    </alternativeName>
    <alternativeName>
        <fullName>RNA-uridine isomerase</fullName>
    </alternativeName>
</protein>
<keyword id="KW-0413">Isomerase</keyword>
<keyword id="KW-1185">Reference proteome</keyword>
<keyword id="KW-0694">RNA-binding</keyword>
<comment type="catalytic activity">
    <reaction>
        <text>a uridine in RNA = a pseudouridine in RNA</text>
        <dbReference type="Rhea" id="RHEA:48348"/>
        <dbReference type="Rhea" id="RHEA-COMP:12068"/>
        <dbReference type="Rhea" id="RHEA-COMP:12069"/>
        <dbReference type="ChEBI" id="CHEBI:65314"/>
        <dbReference type="ChEBI" id="CHEBI:65315"/>
    </reaction>
</comment>
<comment type="similarity">
    <text evidence="3">Belongs to the pseudouridine synthase RluA family.</text>
</comment>
<organism>
    <name type="scientific">Helicobacter pylori (strain ATCC 700392 / 26695)</name>
    <name type="common">Campylobacter pylori</name>
    <dbReference type="NCBI Taxonomy" id="85962"/>
    <lineage>
        <taxon>Bacteria</taxon>
        <taxon>Pseudomonadati</taxon>
        <taxon>Campylobacterota</taxon>
        <taxon>Epsilonproteobacteria</taxon>
        <taxon>Campylobacterales</taxon>
        <taxon>Helicobacteraceae</taxon>
        <taxon>Helicobacter</taxon>
    </lineage>
</organism>